<reference key="1">
    <citation type="journal article" date="2004" name="Nat. Genet.">
        <title>Complete sequencing and characterization of 21,243 full-length human cDNAs.</title>
        <authorList>
            <person name="Ota T."/>
            <person name="Suzuki Y."/>
            <person name="Nishikawa T."/>
            <person name="Otsuki T."/>
            <person name="Sugiyama T."/>
            <person name="Irie R."/>
            <person name="Wakamatsu A."/>
            <person name="Hayashi K."/>
            <person name="Sato H."/>
            <person name="Nagai K."/>
            <person name="Kimura K."/>
            <person name="Makita H."/>
            <person name="Sekine M."/>
            <person name="Obayashi M."/>
            <person name="Nishi T."/>
            <person name="Shibahara T."/>
            <person name="Tanaka T."/>
            <person name="Ishii S."/>
            <person name="Yamamoto J."/>
            <person name="Saito K."/>
            <person name="Kawai Y."/>
            <person name="Isono Y."/>
            <person name="Nakamura Y."/>
            <person name="Nagahari K."/>
            <person name="Murakami K."/>
            <person name="Yasuda T."/>
            <person name="Iwayanagi T."/>
            <person name="Wagatsuma M."/>
            <person name="Shiratori A."/>
            <person name="Sudo H."/>
            <person name="Hosoiri T."/>
            <person name="Kaku Y."/>
            <person name="Kodaira H."/>
            <person name="Kondo H."/>
            <person name="Sugawara M."/>
            <person name="Takahashi M."/>
            <person name="Kanda K."/>
            <person name="Yokoi T."/>
            <person name="Furuya T."/>
            <person name="Kikkawa E."/>
            <person name="Omura Y."/>
            <person name="Abe K."/>
            <person name="Kamihara K."/>
            <person name="Katsuta N."/>
            <person name="Sato K."/>
            <person name="Tanikawa M."/>
            <person name="Yamazaki M."/>
            <person name="Ninomiya K."/>
            <person name="Ishibashi T."/>
            <person name="Yamashita H."/>
            <person name="Murakawa K."/>
            <person name="Fujimori K."/>
            <person name="Tanai H."/>
            <person name="Kimata M."/>
            <person name="Watanabe M."/>
            <person name="Hiraoka S."/>
            <person name="Chiba Y."/>
            <person name="Ishida S."/>
            <person name="Ono Y."/>
            <person name="Takiguchi S."/>
            <person name="Watanabe S."/>
            <person name="Yosida M."/>
            <person name="Hotuta T."/>
            <person name="Kusano J."/>
            <person name="Kanehori K."/>
            <person name="Takahashi-Fujii A."/>
            <person name="Hara H."/>
            <person name="Tanase T.-O."/>
            <person name="Nomura Y."/>
            <person name="Togiya S."/>
            <person name="Komai F."/>
            <person name="Hara R."/>
            <person name="Takeuchi K."/>
            <person name="Arita M."/>
            <person name="Imose N."/>
            <person name="Musashino K."/>
            <person name="Yuuki H."/>
            <person name="Oshima A."/>
            <person name="Sasaki N."/>
            <person name="Aotsuka S."/>
            <person name="Yoshikawa Y."/>
            <person name="Matsunawa H."/>
            <person name="Ichihara T."/>
            <person name="Shiohata N."/>
            <person name="Sano S."/>
            <person name="Moriya S."/>
            <person name="Momiyama H."/>
            <person name="Satoh N."/>
            <person name="Takami S."/>
            <person name="Terashima Y."/>
            <person name="Suzuki O."/>
            <person name="Nakagawa S."/>
            <person name="Senoh A."/>
            <person name="Mizoguchi H."/>
            <person name="Goto Y."/>
            <person name="Shimizu F."/>
            <person name="Wakebe H."/>
            <person name="Hishigaki H."/>
            <person name="Watanabe T."/>
            <person name="Sugiyama A."/>
            <person name="Takemoto M."/>
            <person name="Kawakami B."/>
            <person name="Yamazaki M."/>
            <person name="Watanabe K."/>
            <person name="Kumagai A."/>
            <person name="Itakura S."/>
            <person name="Fukuzumi Y."/>
            <person name="Fujimori Y."/>
            <person name="Komiyama M."/>
            <person name="Tashiro H."/>
            <person name="Tanigami A."/>
            <person name="Fujiwara T."/>
            <person name="Ono T."/>
            <person name="Yamada K."/>
            <person name="Fujii Y."/>
            <person name="Ozaki K."/>
            <person name="Hirao M."/>
            <person name="Ohmori Y."/>
            <person name="Kawabata A."/>
            <person name="Hikiji T."/>
            <person name="Kobatake N."/>
            <person name="Inagaki H."/>
            <person name="Ikema Y."/>
            <person name="Okamoto S."/>
            <person name="Okitani R."/>
            <person name="Kawakami T."/>
            <person name="Noguchi S."/>
            <person name="Itoh T."/>
            <person name="Shigeta K."/>
            <person name="Senba T."/>
            <person name="Matsumura K."/>
            <person name="Nakajima Y."/>
            <person name="Mizuno T."/>
            <person name="Morinaga M."/>
            <person name="Sasaki M."/>
            <person name="Togashi T."/>
            <person name="Oyama M."/>
            <person name="Hata H."/>
            <person name="Watanabe M."/>
            <person name="Komatsu T."/>
            <person name="Mizushima-Sugano J."/>
            <person name="Satoh T."/>
            <person name="Shirai Y."/>
            <person name="Takahashi Y."/>
            <person name="Nakagawa K."/>
            <person name="Okumura K."/>
            <person name="Nagase T."/>
            <person name="Nomura N."/>
            <person name="Kikuchi H."/>
            <person name="Masuho Y."/>
            <person name="Yamashita R."/>
            <person name="Nakai K."/>
            <person name="Yada T."/>
            <person name="Nakamura Y."/>
            <person name="Ohara O."/>
            <person name="Isogai T."/>
            <person name="Sugano S."/>
        </authorList>
    </citation>
    <scope>NUCLEOTIDE SEQUENCE [LARGE SCALE MRNA]</scope>
</reference>
<reference evidence="9 10" key="2">
    <citation type="submission" date="2004-06" db="EMBL/GenBank/DDBJ databases">
        <title>Cloning of human full open reading frames in Gateway(TM) system entry vector (pDONR201).</title>
        <authorList>
            <person name="Ebert L."/>
            <person name="Schick M."/>
            <person name="Neubert P."/>
            <person name="Schatten R."/>
            <person name="Henze S."/>
            <person name="Korn B."/>
        </authorList>
    </citation>
    <scope>NUCLEOTIDE SEQUENCE [LARGE SCALE MRNA]</scope>
</reference>
<reference key="3">
    <citation type="journal article" date="2005" name="Nature">
        <title>Generation and annotation of the DNA sequences of human chromosomes 2 and 4.</title>
        <authorList>
            <person name="Hillier L.W."/>
            <person name="Graves T.A."/>
            <person name="Fulton R.S."/>
            <person name="Fulton L.A."/>
            <person name="Pepin K.H."/>
            <person name="Minx P."/>
            <person name="Wagner-McPherson C."/>
            <person name="Layman D."/>
            <person name="Wylie K."/>
            <person name="Sekhon M."/>
            <person name="Becker M.C."/>
            <person name="Fewell G.A."/>
            <person name="Delehaunty K.D."/>
            <person name="Miner T.L."/>
            <person name="Nash W.E."/>
            <person name="Kremitzki C."/>
            <person name="Oddy L."/>
            <person name="Du H."/>
            <person name="Sun H."/>
            <person name="Bradshaw-Cordum H."/>
            <person name="Ali J."/>
            <person name="Carter J."/>
            <person name="Cordes M."/>
            <person name="Harris A."/>
            <person name="Isak A."/>
            <person name="van Brunt A."/>
            <person name="Nguyen C."/>
            <person name="Du F."/>
            <person name="Courtney L."/>
            <person name="Kalicki J."/>
            <person name="Ozersky P."/>
            <person name="Abbott S."/>
            <person name="Armstrong J."/>
            <person name="Belter E.A."/>
            <person name="Caruso L."/>
            <person name="Cedroni M."/>
            <person name="Cotton M."/>
            <person name="Davidson T."/>
            <person name="Desai A."/>
            <person name="Elliott G."/>
            <person name="Erb T."/>
            <person name="Fronick C."/>
            <person name="Gaige T."/>
            <person name="Haakenson W."/>
            <person name="Haglund K."/>
            <person name="Holmes A."/>
            <person name="Harkins R."/>
            <person name="Kim K."/>
            <person name="Kruchowski S.S."/>
            <person name="Strong C.M."/>
            <person name="Grewal N."/>
            <person name="Goyea E."/>
            <person name="Hou S."/>
            <person name="Levy A."/>
            <person name="Martinka S."/>
            <person name="Mead K."/>
            <person name="McLellan M.D."/>
            <person name="Meyer R."/>
            <person name="Randall-Maher J."/>
            <person name="Tomlinson C."/>
            <person name="Dauphin-Kohlberg S."/>
            <person name="Kozlowicz-Reilly A."/>
            <person name="Shah N."/>
            <person name="Swearengen-Shahid S."/>
            <person name="Snider J."/>
            <person name="Strong J.T."/>
            <person name="Thompson J."/>
            <person name="Yoakum M."/>
            <person name="Leonard S."/>
            <person name="Pearman C."/>
            <person name="Trani L."/>
            <person name="Radionenko M."/>
            <person name="Waligorski J.E."/>
            <person name="Wang C."/>
            <person name="Rock S.M."/>
            <person name="Tin-Wollam A.-M."/>
            <person name="Maupin R."/>
            <person name="Latreille P."/>
            <person name="Wendl M.C."/>
            <person name="Yang S.-P."/>
            <person name="Pohl C."/>
            <person name="Wallis J.W."/>
            <person name="Spieth J."/>
            <person name="Bieri T.A."/>
            <person name="Berkowicz N."/>
            <person name="Nelson J.O."/>
            <person name="Osborne J."/>
            <person name="Ding L."/>
            <person name="Meyer R."/>
            <person name="Sabo A."/>
            <person name="Shotland Y."/>
            <person name="Sinha P."/>
            <person name="Wohldmann P.E."/>
            <person name="Cook L.L."/>
            <person name="Hickenbotham M.T."/>
            <person name="Eldred J."/>
            <person name="Williams D."/>
            <person name="Jones T.A."/>
            <person name="She X."/>
            <person name="Ciccarelli F.D."/>
            <person name="Izaurralde E."/>
            <person name="Taylor J."/>
            <person name="Schmutz J."/>
            <person name="Myers R.M."/>
            <person name="Cox D.R."/>
            <person name="Huang X."/>
            <person name="McPherson J.D."/>
            <person name="Mardis E.R."/>
            <person name="Clifton S.W."/>
            <person name="Warren W.C."/>
            <person name="Chinwalla A.T."/>
            <person name="Eddy S.R."/>
            <person name="Marra M.A."/>
            <person name="Ovcharenko I."/>
            <person name="Furey T.S."/>
            <person name="Miller W."/>
            <person name="Eichler E.E."/>
            <person name="Bork P."/>
            <person name="Suyama M."/>
            <person name="Torrents D."/>
            <person name="Waterston R.H."/>
            <person name="Wilson R.K."/>
        </authorList>
    </citation>
    <scope>NUCLEOTIDE SEQUENCE [LARGE SCALE GENOMIC DNA]</scope>
</reference>
<reference key="4">
    <citation type="journal article" date="2004" name="Genome Res.">
        <title>The status, quality, and expansion of the NIH full-length cDNA project: the Mammalian Gene Collection (MGC).</title>
        <authorList>
            <consortium name="The MGC Project Team"/>
        </authorList>
    </citation>
    <scope>NUCLEOTIDE SEQUENCE [LARGE SCALE MRNA]</scope>
    <source>
        <tissue>Uterus</tissue>
    </source>
</reference>
<reference key="5">
    <citation type="journal article" date="2001" name="J. Biol. Chem.">
        <title>The large subunit of the mammalian mitochondrial ribosome. Analysis of the complement of ribosomal proteins present.</title>
        <authorList>
            <person name="Koc E.C."/>
            <person name="Burkhart W."/>
            <person name="Blackburn K."/>
            <person name="Moyer M.B."/>
            <person name="Schlatzer D.M."/>
            <person name="Moseley A."/>
            <person name="Spremulli L.L."/>
        </authorList>
    </citation>
    <scope>IDENTIFICATION</scope>
</reference>
<reference key="6">
    <citation type="journal article" date="2011" name="BMC Syst. Biol.">
        <title>Initial characterization of the human central proteome.</title>
        <authorList>
            <person name="Burkard T.R."/>
            <person name="Planyavsky M."/>
            <person name="Kaupe I."/>
            <person name="Breitwieser F.P."/>
            <person name="Buerckstuemmer T."/>
            <person name="Bennett K.L."/>
            <person name="Superti-Furga G."/>
            <person name="Colinge J."/>
        </authorList>
    </citation>
    <scope>IDENTIFICATION BY MASS SPECTROMETRY [LARGE SCALE ANALYSIS]</scope>
</reference>
<reference key="7">
    <citation type="journal article" date="2013" name="J. Med. Genet.">
        <title>Whole-exome sequencing identifies a mutation in the mitochondrial ribosome protein MRPL44 to underlie mitochondrial infantile cardiomyopathy.</title>
        <authorList>
            <person name="Carroll C.J."/>
            <person name="Isohanni P."/>
            <person name="Poeyhoenen R."/>
            <person name="Euro L."/>
            <person name="Richter U."/>
            <person name="Brilhante V."/>
            <person name="Goetz A."/>
            <person name="Lahtinen T."/>
            <person name="Paetau A."/>
            <person name="Pihko H."/>
            <person name="Battersby B.J."/>
            <person name="Tyynismaa H."/>
            <person name="Suomalainen A."/>
        </authorList>
    </citation>
    <scope>FUNCTION</scope>
    <scope>VARIANT COXPD16 ARG-156</scope>
</reference>
<reference key="8">
    <citation type="journal article" date="2014" name="J. Proteomics">
        <title>An enzyme assisted RP-RPLC approach for in-depth analysis of human liver phosphoproteome.</title>
        <authorList>
            <person name="Bian Y."/>
            <person name="Song C."/>
            <person name="Cheng K."/>
            <person name="Dong M."/>
            <person name="Wang F."/>
            <person name="Huang J."/>
            <person name="Sun D."/>
            <person name="Wang L."/>
            <person name="Ye M."/>
            <person name="Zou H."/>
        </authorList>
    </citation>
    <scope>IDENTIFICATION BY MASS SPECTROMETRY [LARGE SCALE ANALYSIS]</scope>
    <source>
        <tissue>Liver</tissue>
    </source>
</reference>
<reference key="9">
    <citation type="journal article" date="2015" name="Proteomics">
        <title>N-terminome analysis of the human mitochondrial proteome.</title>
        <authorList>
            <person name="Vaca Jacome A.S."/>
            <person name="Rabilloud T."/>
            <person name="Schaeffer-Reiss C."/>
            <person name="Rompais M."/>
            <person name="Ayoub D."/>
            <person name="Lane L."/>
            <person name="Bairoch A."/>
            <person name="Van Dorsselaer A."/>
            <person name="Carapito C."/>
        </authorList>
    </citation>
    <scope>IDENTIFICATION BY MASS SPECTROMETRY [LARGE SCALE ANALYSIS]</scope>
</reference>
<reference evidence="11" key="10">
    <citation type="journal article" date="2014" name="Science">
        <title>Structure of the large ribosomal subunit from human mitochondria.</title>
        <authorList>
            <person name="Brown A."/>
            <person name="Amunts A."/>
            <person name="Bai X.C."/>
            <person name="Sugimoto Y."/>
            <person name="Edwards P.C."/>
            <person name="Murshudov G."/>
            <person name="Scheres S.H."/>
            <person name="Ramakrishnan V."/>
        </authorList>
    </citation>
    <scope>STRUCTURE BY ELECTRON MICROSCOPY (3.40 ANGSTROMS)</scope>
    <scope>SUBCELLULAR LOCATION</scope>
    <scope>SUBUNIT</scope>
</reference>
<reference evidence="12" key="11">
    <citation type="journal article" date="2015" name="Science">
        <title>Ribosome. The structure of the human mitochondrial ribosome.</title>
        <authorList>
            <person name="Amunts A."/>
            <person name="Brown A."/>
            <person name="Toots J."/>
            <person name="Scheres S.H."/>
            <person name="Ramakrishnan V."/>
        </authorList>
    </citation>
    <scope>STRUCTURE BY ELECTRON MICROSCOPY (3.50 ANGSTROMS)</scope>
    <scope>SUBCELLULAR LOCATION</scope>
    <scope>SUBUNIT</scope>
</reference>
<reference evidence="13 14" key="12">
    <citation type="journal article" date="2017" name="Nat. Struct. Mol. Biol.">
        <title>Structures of the human mitochondrial ribosome in native states of assembly.</title>
        <authorList>
            <person name="Brown A."/>
            <person name="Rathore S."/>
            <person name="Kimanius D."/>
            <person name="Aibara S."/>
            <person name="Bai X.C."/>
            <person name="Rorbach J."/>
            <person name="Amunts A."/>
            <person name="Ramakrishnan V."/>
        </authorList>
    </citation>
    <scope>STRUCTURE BY ELECTRON MICROSCOPY (3.03 ANGSTROMS)</scope>
    <scope>SUBCELLULAR LOCATION</scope>
    <scope>SUBUNIT</scope>
</reference>
<reference evidence="15 16" key="13">
    <citation type="journal article" date="2022" name="Nat. Commun.">
        <title>A late-stage assembly checkpoint of the human mitochondrial ribosome large subunit.</title>
        <authorList>
            <person name="Rebelo-Guiomar P."/>
            <person name="Pellegrino S."/>
            <person name="Dent K.C."/>
            <person name="Sas-Chen A."/>
            <person name="Miller-Fleming L."/>
            <person name="Garone C."/>
            <person name="Van Haute L."/>
            <person name="Rogan J.F."/>
            <person name="Dinan A."/>
            <person name="Firth A.E."/>
            <person name="Andrews B."/>
            <person name="Whitworth A.J."/>
            <person name="Schwartz S."/>
            <person name="Warren A.J."/>
            <person name="Minczuk M."/>
        </authorList>
    </citation>
    <scope>STRUCTURE BY ELECTRON MICROSCOPY (2.9 ANGSTROMS) IN COMPLEX WITH MTLSU</scope>
    <scope>SUBUNIT</scope>
</reference>
<organism>
    <name type="scientific">Homo sapiens</name>
    <name type="common">Human</name>
    <dbReference type="NCBI Taxonomy" id="9606"/>
    <lineage>
        <taxon>Eukaryota</taxon>
        <taxon>Metazoa</taxon>
        <taxon>Chordata</taxon>
        <taxon>Craniata</taxon>
        <taxon>Vertebrata</taxon>
        <taxon>Euteleostomi</taxon>
        <taxon>Mammalia</taxon>
        <taxon>Eutheria</taxon>
        <taxon>Euarchontoglires</taxon>
        <taxon>Primates</taxon>
        <taxon>Haplorrhini</taxon>
        <taxon>Catarrhini</taxon>
        <taxon>Hominidae</taxon>
        <taxon>Homo</taxon>
    </lineage>
</organism>
<accession>Q9H9J2</accession>
<accession>Q53S16</accession>
<accession>Q6IA62</accession>
<accession>Q9H821</accession>
<feature type="transit peptide" description="Mitochondrion" evidence="1">
    <location>
        <begin position="1"/>
        <end position="30"/>
    </location>
</feature>
<feature type="chain" id="PRO_0000030821" description="Large ribosomal subunit protein mL44">
    <location>
        <begin position="31"/>
        <end position="332"/>
    </location>
</feature>
<feature type="domain" description="RNase III">
    <location>
        <begin position="86"/>
        <end position="228"/>
    </location>
</feature>
<feature type="domain" description="DRBM" evidence="2">
    <location>
        <begin position="236"/>
        <end position="306"/>
    </location>
</feature>
<feature type="sequence variant" id="VAR_034464" description="In dbSNP:rs11546406.">
    <original>T</original>
    <variation>I</variation>
    <location>
        <position position="138"/>
    </location>
</feature>
<feature type="sequence variant" id="VAR_070568" description="In COXPD16; dbSNP:rs143697995." evidence="3">
    <original>L</original>
    <variation>R</variation>
    <location>
        <position position="156"/>
    </location>
</feature>
<feature type="sequence conflict" description="In Ref. 1; BAB14802." evidence="9" ref="1">
    <original>W</original>
    <variation>R</variation>
    <location>
        <position position="232"/>
    </location>
</feature>
<feature type="helix" evidence="18">
    <location>
        <begin position="36"/>
        <end position="52"/>
    </location>
</feature>
<feature type="helix" evidence="18">
    <location>
        <begin position="60"/>
        <end position="62"/>
    </location>
</feature>
<feature type="strand" evidence="18">
    <location>
        <begin position="63"/>
        <end position="65"/>
    </location>
</feature>
<feature type="helix" evidence="18">
    <location>
        <begin position="68"/>
        <end position="79"/>
    </location>
</feature>
<feature type="helix" evidence="18">
    <location>
        <begin position="85"/>
        <end position="91"/>
    </location>
</feature>
<feature type="helix" evidence="18">
    <location>
        <begin position="95"/>
        <end position="106"/>
    </location>
</feature>
<feature type="helix" evidence="18">
    <location>
        <begin position="123"/>
        <end position="144"/>
    </location>
</feature>
<feature type="strand" evidence="19">
    <location>
        <begin position="146"/>
        <end position="148"/>
    </location>
</feature>
<feature type="helix" evidence="18">
    <location>
        <begin position="150"/>
        <end position="160"/>
    </location>
</feature>
<feature type="helix" evidence="18">
    <location>
        <begin position="163"/>
        <end position="172"/>
    </location>
</feature>
<feature type="helix" evidence="18">
    <location>
        <begin position="175"/>
        <end position="178"/>
    </location>
</feature>
<feature type="strand" evidence="18">
    <location>
        <begin position="182"/>
        <end position="185"/>
    </location>
</feature>
<feature type="helix" evidence="18">
    <location>
        <begin position="188"/>
        <end position="206"/>
    </location>
</feature>
<feature type="helix" evidence="18">
    <location>
        <begin position="208"/>
        <end position="218"/>
    </location>
</feature>
<feature type="helix" evidence="18">
    <location>
        <begin position="220"/>
        <end position="223"/>
    </location>
</feature>
<feature type="helix" evidence="18">
    <location>
        <begin position="228"/>
        <end position="231"/>
    </location>
</feature>
<feature type="helix" evidence="18">
    <location>
        <begin position="237"/>
        <end position="247"/>
    </location>
</feature>
<feature type="strand" evidence="18">
    <location>
        <begin position="254"/>
        <end position="261"/>
    </location>
</feature>
<feature type="strand" evidence="18">
    <location>
        <begin position="265"/>
        <end position="267"/>
    </location>
</feature>
<feature type="strand" evidence="18">
    <location>
        <begin position="269"/>
        <end position="276"/>
    </location>
</feature>
<feature type="strand" evidence="18">
    <location>
        <begin position="279"/>
        <end position="288"/>
    </location>
</feature>
<feature type="helix" evidence="18">
    <location>
        <begin position="289"/>
        <end position="305"/>
    </location>
</feature>
<feature type="strand" evidence="17">
    <location>
        <begin position="309"/>
        <end position="311"/>
    </location>
</feature>
<gene>
    <name type="primary">MRPL44</name>
</gene>
<dbReference type="EC" id="3.1.26.-"/>
<dbReference type="EMBL" id="AK022763">
    <property type="protein sequence ID" value="BAB14234.1"/>
    <property type="molecule type" value="mRNA"/>
</dbReference>
<dbReference type="EMBL" id="AK024052">
    <property type="protein sequence ID" value="BAB14802.1"/>
    <property type="molecule type" value="mRNA"/>
</dbReference>
<dbReference type="EMBL" id="CR457293">
    <property type="protein sequence ID" value="CAG33574.1"/>
    <property type="molecule type" value="mRNA"/>
</dbReference>
<dbReference type="EMBL" id="AC073641">
    <property type="protein sequence ID" value="AAY14925.1"/>
    <property type="molecule type" value="Genomic_DNA"/>
</dbReference>
<dbReference type="EMBL" id="BC012058">
    <property type="protein sequence ID" value="AAH12058.1"/>
    <property type="molecule type" value="mRNA"/>
</dbReference>
<dbReference type="CCDS" id="CCDS2459.1"/>
<dbReference type="RefSeq" id="NP_075066.1">
    <property type="nucleotide sequence ID" value="NM_022915.5"/>
</dbReference>
<dbReference type="PDB" id="3J7Y">
    <property type="method" value="EM"/>
    <property type="resolution" value="3.40 A"/>
    <property type="chains" value="c=1-332"/>
</dbReference>
<dbReference type="PDB" id="3J9M">
    <property type="method" value="EM"/>
    <property type="resolution" value="3.50 A"/>
    <property type="chains" value="c=1-332"/>
</dbReference>
<dbReference type="PDB" id="5OOL">
    <property type="method" value="EM"/>
    <property type="resolution" value="3.06 A"/>
    <property type="chains" value="c=1-332"/>
</dbReference>
<dbReference type="PDB" id="5OOM">
    <property type="method" value="EM"/>
    <property type="resolution" value="3.03 A"/>
    <property type="chains" value="c=1-332"/>
</dbReference>
<dbReference type="PDB" id="6I9R">
    <property type="method" value="EM"/>
    <property type="resolution" value="3.90 A"/>
    <property type="chains" value="c=1-332"/>
</dbReference>
<dbReference type="PDB" id="6NU2">
    <property type="method" value="EM"/>
    <property type="resolution" value="3.90 A"/>
    <property type="chains" value="c=31-316"/>
</dbReference>
<dbReference type="PDB" id="6NU3">
    <property type="method" value="EM"/>
    <property type="resolution" value="4.40 A"/>
    <property type="chains" value="c=1-332"/>
</dbReference>
<dbReference type="PDB" id="6VLZ">
    <property type="method" value="EM"/>
    <property type="resolution" value="2.97 A"/>
    <property type="chains" value="c=1-332"/>
</dbReference>
<dbReference type="PDB" id="6VMI">
    <property type="method" value="EM"/>
    <property type="resolution" value="2.96 A"/>
    <property type="chains" value="c=1-332"/>
</dbReference>
<dbReference type="PDB" id="6ZM5">
    <property type="method" value="EM"/>
    <property type="resolution" value="2.89 A"/>
    <property type="chains" value="c=1-332"/>
</dbReference>
<dbReference type="PDB" id="6ZM6">
    <property type="method" value="EM"/>
    <property type="resolution" value="2.59 A"/>
    <property type="chains" value="c=1-332"/>
</dbReference>
<dbReference type="PDB" id="6ZS9">
    <property type="method" value="EM"/>
    <property type="resolution" value="4.00 A"/>
    <property type="chains" value="c=1-332"/>
</dbReference>
<dbReference type="PDB" id="6ZSA">
    <property type="method" value="EM"/>
    <property type="resolution" value="4.00 A"/>
    <property type="chains" value="c=1-332"/>
</dbReference>
<dbReference type="PDB" id="6ZSB">
    <property type="method" value="EM"/>
    <property type="resolution" value="4.50 A"/>
    <property type="chains" value="c=1-332"/>
</dbReference>
<dbReference type="PDB" id="6ZSC">
    <property type="method" value="EM"/>
    <property type="resolution" value="3.50 A"/>
    <property type="chains" value="c=1-332"/>
</dbReference>
<dbReference type="PDB" id="6ZSD">
    <property type="method" value="EM"/>
    <property type="resolution" value="3.70 A"/>
    <property type="chains" value="c=1-332"/>
</dbReference>
<dbReference type="PDB" id="6ZSE">
    <property type="method" value="EM"/>
    <property type="resolution" value="5.00 A"/>
    <property type="chains" value="c=1-332"/>
</dbReference>
<dbReference type="PDB" id="6ZSG">
    <property type="method" value="EM"/>
    <property type="resolution" value="4.00 A"/>
    <property type="chains" value="c=1-332"/>
</dbReference>
<dbReference type="PDB" id="7A5F">
    <property type="method" value="EM"/>
    <property type="resolution" value="4.40 A"/>
    <property type="chains" value="c3=1-332"/>
</dbReference>
<dbReference type="PDB" id="7A5G">
    <property type="method" value="EM"/>
    <property type="resolution" value="4.33 A"/>
    <property type="chains" value="c3=1-332"/>
</dbReference>
<dbReference type="PDB" id="7A5H">
    <property type="method" value="EM"/>
    <property type="resolution" value="3.30 A"/>
    <property type="chains" value="c=1-332"/>
</dbReference>
<dbReference type="PDB" id="7A5I">
    <property type="method" value="EM"/>
    <property type="resolution" value="3.70 A"/>
    <property type="chains" value="c3=1-332"/>
</dbReference>
<dbReference type="PDB" id="7A5J">
    <property type="method" value="EM"/>
    <property type="resolution" value="3.10 A"/>
    <property type="chains" value="c=1-332"/>
</dbReference>
<dbReference type="PDB" id="7A5K">
    <property type="method" value="EM"/>
    <property type="resolution" value="3.70 A"/>
    <property type="chains" value="c3=1-332"/>
</dbReference>
<dbReference type="PDB" id="7L08">
    <property type="method" value="EM"/>
    <property type="resolution" value="3.49 A"/>
    <property type="chains" value="c=1-332"/>
</dbReference>
<dbReference type="PDB" id="7L20">
    <property type="method" value="EM"/>
    <property type="resolution" value="3.15 A"/>
    <property type="chains" value="c=1-332"/>
</dbReference>
<dbReference type="PDB" id="7O9K">
    <property type="method" value="EM"/>
    <property type="resolution" value="3.10 A"/>
    <property type="chains" value="c=1-332"/>
</dbReference>
<dbReference type="PDB" id="7O9M">
    <property type="method" value="EM"/>
    <property type="resolution" value="2.50 A"/>
    <property type="chains" value="c=1-332"/>
</dbReference>
<dbReference type="PDB" id="7ODR">
    <property type="method" value="EM"/>
    <property type="resolution" value="2.90 A"/>
    <property type="chains" value="c=1-332"/>
</dbReference>
<dbReference type="PDB" id="7ODS">
    <property type="method" value="EM"/>
    <property type="resolution" value="3.10 A"/>
    <property type="chains" value="c=1-332"/>
</dbReference>
<dbReference type="PDB" id="7ODT">
    <property type="method" value="EM"/>
    <property type="resolution" value="3.10 A"/>
    <property type="chains" value="c=1-332"/>
</dbReference>
<dbReference type="PDB" id="7OF0">
    <property type="method" value="EM"/>
    <property type="resolution" value="2.20 A"/>
    <property type="chains" value="c=1-332"/>
</dbReference>
<dbReference type="PDB" id="7OF2">
    <property type="method" value="EM"/>
    <property type="resolution" value="2.70 A"/>
    <property type="chains" value="c=1-332"/>
</dbReference>
<dbReference type="PDB" id="7OF3">
    <property type="method" value="EM"/>
    <property type="resolution" value="2.70 A"/>
    <property type="chains" value="c=1-332"/>
</dbReference>
<dbReference type="PDB" id="7OF4">
    <property type="method" value="EM"/>
    <property type="resolution" value="2.70 A"/>
    <property type="chains" value="c=1-332"/>
</dbReference>
<dbReference type="PDB" id="7OF5">
    <property type="method" value="EM"/>
    <property type="resolution" value="2.90 A"/>
    <property type="chains" value="c=1-332"/>
</dbReference>
<dbReference type="PDB" id="7OF6">
    <property type="method" value="EM"/>
    <property type="resolution" value="2.60 A"/>
    <property type="chains" value="c=1-332"/>
</dbReference>
<dbReference type="PDB" id="7OF7">
    <property type="method" value="EM"/>
    <property type="resolution" value="2.50 A"/>
    <property type="chains" value="c=1-332"/>
</dbReference>
<dbReference type="PDB" id="7OG4">
    <property type="method" value="EM"/>
    <property type="resolution" value="3.80 A"/>
    <property type="chains" value="c=1-332"/>
</dbReference>
<dbReference type="PDB" id="7OI6">
    <property type="method" value="EM"/>
    <property type="resolution" value="5.70 A"/>
    <property type="chains" value="c=1-332"/>
</dbReference>
<dbReference type="PDB" id="7OI7">
    <property type="method" value="EM"/>
    <property type="resolution" value="3.50 A"/>
    <property type="chains" value="c=1-332"/>
</dbReference>
<dbReference type="PDB" id="7OI8">
    <property type="method" value="EM"/>
    <property type="resolution" value="3.50 A"/>
    <property type="chains" value="c=1-332"/>
</dbReference>
<dbReference type="PDB" id="7OI9">
    <property type="method" value="EM"/>
    <property type="resolution" value="3.30 A"/>
    <property type="chains" value="c=1-332"/>
</dbReference>
<dbReference type="PDB" id="7OIA">
    <property type="method" value="EM"/>
    <property type="resolution" value="3.20 A"/>
    <property type="chains" value="c=1-332"/>
</dbReference>
<dbReference type="PDB" id="7OIB">
    <property type="method" value="EM"/>
    <property type="resolution" value="3.30 A"/>
    <property type="chains" value="c=1-332"/>
</dbReference>
<dbReference type="PDB" id="7OIC">
    <property type="method" value="EM"/>
    <property type="resolution" value="3.10 A"/>
    <property type="chains" value="c=1-332"/>
</dbReference>
<dbReference type="PDB" id="7OID">
    <property type="method" value="EM"/>
    <property type="resolution" value="3.70 A"/>
    <property type="chains" value="c=1-332"/>
</dbReference>
<dbReference type="PDB" id="7OIE">
    <property type="method" value="EM"/>
    <property type="resolution" value="3.50 A"/>
    <property type="chains" value="c=1-332"/>
</dbReference>
<dbReference type="PDB" id="7PD3">
    <property type="method" value="EM"/>
    <property type="resolution" value="3.40 A"/>
    <property type="chains" value="c=1-332"/>
</dbReference>
<dbReference type="PDB" id="7PO4">
    <property type="method" value="EM"/>
    <property type="resolution" value="2.56 A"/>
    <property type="chains" value="c=1-332"/>
</dbReference>
<dbReference type="PDB" id="7QH6">
    <property type="method" value="EM"/>
    <property type="resolution" value="3.08 A"/>
    <property type="chains" value="c=1-332"/>
</dbReference>
<dbReference type="PDB" id="7QH7">
    <property type="method" value="EM"/>
    <property type="resolution" value="2.89 A"/>
    <property type="chains" value="c=31-317"/>
</dbReference>
<dbReference type="PDB" id="7QI4">
    <property type="method" value="EM"/>
    <property type="resolution" value="2.21 A"/>
    <property type="chains" value="c=1-332"/>
</dbReference>
<dbReference type="PDB" id="7QI5">
    <property type="method" value="EM"/>
    <property type="resolution" value="2.63 A"/>
    <property type="chains" value="c=1-332"/>
</dbReference>
<dbReference type="PDB" id="7QI6">
    <property type="method" value="EM"/>
    <property type="resolution" value="2.98 A"/>
    <property type="chains" value="c=1-332"/>
</dbReference>
<dbReference type="PDB" id="8ANY">
    <property type="method" value="EM"/>
    <property type="resolution" value="2.85 A"/>
    <property type="chains" value="c=1-332"/>
</dbReference>
<dbReference type="PDB" id="8K2A">
    <property type="method" value="EM"/>
    <property type="resolution" value="2.90 A"/>
    <property type="chains" value="Lr=1-332"/>
</dbReference>
<dbReference type="PDB" id="8K2B">
    <property type="method" value="EM"/>
    <property type="resolution" value="3.40 A"/>
    <property type="chains" value="Lr=1-332"/>
</dbReference>
<dbReference type="PDB" id="8OIR">
    <property type="method" value="EM"/>
    <property type="resolution" value="3.10 A"/>
    <property type="chains" value="Bt=1-332"/>
</dbReference>
<dbReference type="PDB" id="8OIT">
    <property type="method" value="EM"/>
    <property type="resolution" value="2.90 A"/>
    <property type="chains" value="Bt=1-332"/>
</dbReference>
<dbReference type="PDB" id="8PK0">
    <property type="method" value="EM"/>
    <property type="resolution" value="3.03 A"/>
    <property type="chains" value="c=1-332"/>
</dbReference>
<dbReference type="PDB" id="8QSJ">
    <property type="method" value="EM"/>
    <property type="resolution" value="3.00 A"/>
    <property type="chains" value="c=1-332"/>
</dbReference>
<dbReference type="PDB" id="8QU5">
    <property type="method" value="EM"/>
    <property type="resolution" value="2.42 A"/>
    <property type="chains" value="c=1-332"/>
</dbReference>
<dbReference type="PDB" id="8RRI">
    <property type="method" value="EM"/>
    <property type="resolution" value="2.40 A"/>
    <property type="chains" value="c=1-332"/>
</dbReference>
<dbReference type="PDB" id="8XT0">
    <property type="method" value="EM"/>
    <property type="resolution" value="3.20 A"/>
    <property type="chains" value="Lr=1-332"/>
</dbReference>
<dbReference type="PDB" id="8XT1">
    <property type="method" value="EM"/>
    <property type="resolution" value="3.10 A"/>
    <property type="chains" value="Lr=1-332"/>
</dbReference>
<dbReference type="PDB" id="8XT2">
    <property type="method" value="EM"/>
    <property type="resolution" value="3.30 A"/>
    <property type="chains" value="Lr=1-332"/>
</dbReference>
<dbReference type="PDB" id="8XT3">
    <property type="method" value="EM"/>
    <property type="resolution" value="3.10 A"/>
    <property type="chains" value="Lr=1-332"/>
</dbReference>
<dbReference type="PDBsum" id="3J7Y"/>
<dbReference type="PDBsum" id="3J9M"/>
<dbReference type="PDBsum" id="5OOL"/>
<dbReference type="PDBsum" id="5OOM"/>
<dbReference type="PDBsum" id="6I9R"/>
<dbReference type="PDBsum" id="6NU2"/>
<dbReference type="PDBsum" id="6NU3"/>
<dbReference type="PDBsum" id="6VLZ"/>
<dbReference type="PDBsum" id="6VMI"/>
<dbReference type="PDBsum" id="6ZM5"/>
<dbReference type="PDBsum" id="6ZM6"/>
<dbReference type="PDBsum" id="6ZS9"/>
<dbReference type="PDBsum" id="6ZSA"/>
<dbReference type="PDBsum" id="6ZSB"/>
<dbReference type="PDBsum" id="6ZSC"/>
<dbReference type="PDBsum" id="6ZSD"/>
<dbReference type="PDBsum" id="6ZSE"/>
<dbReference type="PDBsum" id="6ZSG"/>
<dbReference type="PDBsum" id="7A5F"/>
<dbReference type="PDBsum" id="7A5G"/>
<dbReference type="PDBsum" id="7A5H"/>
<dbReference type="PDBsum" id="7A5I"/>
<dbReference type="PDBsum" id="7A5J"/>
<dbReference type="PDBsum" id="7A5K"/>
<dbReference type="PDBsum" id="7L08"/>
<dbReference type="PDBsum" id="7L20"/>
<dbReference type="PDBsum" id="7O9K"/>
<dbReference type="PDBsum" id="7O9M"/>
<dbReference type="PDBsum" id="7ODR"/>
<dbReference type="PDBsum" id="7ODS"/>
<dbReference type="PDBsum" id="7ODT"/>
<dbReference type="PDBsum" id="7OF0"/>
<dbReference type="PDBsum" id="7OF2"/>
<dbReference type="PDBsum" id="7OF3"/>
<dbReference type="PDBsum" id="7OF4"/>
<dbReference type="PDBsum" id="7OF5"/>
<dbReference type="PDBsum" id="7OF6"/>
<dbReference type="PDBsum" id="7OF7"/>
<dbReference type="PDBsum" id="7OG4"/>
<dbReference type="PDBsum" id="7OI6"/>
<dbReference type="PDBsum" id="7OI7"/>
<dbReference type="PDBsum" id="7OI8"/>
<dbReference type="PDBsum" id="7OI9"/>
<dbReference type="PDBsum" id="7OIA"/>
<dbReference type="PDBsum" id="7OIB"/>
<dbReference type="PDBsum" id="7OIC"/>
<dbReference type="PDBsum" id="7OID"/>
<dbReference type="PDBsum" id="7OIE"/>
<dbReference type="PDBsum" id="7PD3"/>
<dbReference type="PDBsum" id="7PO4"/>
<dbReference type="PDBsum" id="7QH6"/>
<dbReference type="PDBsum" id="7QH7"/>
<dbReference type="PDBsum" id="7QI4"/>
<dbReference type="PDBsum" id="7QI5"/>
<dbReference type="PDBsum" id="7QI6"/>
<dbReference type="PDBsum" id="8ANY"/>
<dbReference type="PDBsum" id="8K2A"/>
<dbReference type="PDBsum" id="8K2B"/>
<dbReference type="PDBsum" id="8OIR"/>
<dbReference type="PDBsum" id="8OIT"/>
<dbReference type="PDBsum" id="8PK0"/>
<dbReference type="PDBsum" id="8QSJ"/>
<dbReference type="PDBsum" id="8QU5"/>
<dbReference type="PDBsum" id="8RRI"/>
<dbReference type="PDBsum" id="8XT0"/>
<dbReference type="PDBsum" id="8XT1"/>
<dbReference type="PDBsum" id="8XT2"/>
<dbReference type="PDBsum" id="8XT3"/>
<dbReference type="EMDB" id="EMD-0514"/>
<dbReference type="EMDB" id="EMD-0515"/>
<dbReference type="EMDB" id="EMD-11278"/>
<dbReference type="EMDB" id="EMD-11279"/>
<dbReference type="EMDB" id="EMD-11390"/>
<dbReference type="EMDB" id="EMD-11391"/>
<dbReference type="EMDB" id="EMD-11392"/>
<dbReference type="EMDB" id="EMD-11393"/>
<dbReference type="EMDB" id="EMD-11394"/>
<dbReference type="EMDB" id="EMD-11395"/>
<dbReference type="EMDB" id="EMD-11397"/>
<dbReference type="EMDB" id="EMD-11641"/>
<dbReference type="EMDB" id="EMD-11642"/>
<dbReference type="EMDB" id="EMD-11643"/>
<dbReference type="EMDB" id="EMD-11644"/>
<dbReference type="EMDB" id="EMD-11645"/>
<dbReference type="EMDB" id="EMD-11646"/>
<dbReference type="EMDB" id="EMD-12763"/>
<dbReference type="EMDB" id="EMD-12764"/>
<dbReference type="EMDB" id="EMD-12845"/>
<dbReference type="EMDB" id="EMD-12846"/>
<dbReference type="EMDB" id="EMD-12847"/>
<dbReference type="EMDB" id="EMD-12865"/>
<dbReference type="EMDB" id="EMD-12867"/>
<dbReference type="EMDB" id="EMD-12868"/>
<dbReference type="EMDB" id="EMD-12869"/>
<dbReference type="EMDB" id="EMD-12870"/>
<dbReference type="EMDB" id="EMD-12871"/>
<dbReference type="EMDB" id="EMD-12872"/>
<dbReference type="EMDB" id="EMD-12877"/>
<dbReference type="EMDB" id="EMD-12919"/>
<dbReference type="EMDB" id="EMD-12920"/>
<dbReference type="EMDB" id="EMD-12921"/>
<dbReference type="EMDB" id="EMD-12922"/>
<dbReference type="EMDB" id="EMD-12923"/>
<dbReference type="EMDB" id="EMD-12924"/>
<dbReference type="EMDB" id="EMD-12925"/>
<dbReference type="EMDB" id="EMD-12926"/>
<dbReference type="EMDB" id="EMD-12927"/>
<dbReference type="EMDB" id="EMD-13329"/>
<dbReference type="EMDB" id="EMD-13562"/>
<dbReference type="EMDB" id="EMD-13965"/>
<dbReference type="EMDB" id="EMD-13967"/>
<dbReference type="EMDB" id="EMD-13980"/>
<dbReference type="EMDB" id="EMD-13981"/>
<dbReference type="EMDB" id="EMD-13982"/>
<dbReference type="EMDB" id="EMD-15544"/>
<dbReference type="EMDB" id="EMD-16897"/>
<dbReference type="EMDB" id="EMD-16899"/>
<dbReference type="EMDB" id="EMD-17719"/>
<dbReference type="EMDB" id="EMD-19460"/>
<dbReference type="EMDB" id="EMD-21233"/>
<dbReference type="EMDB" id="EMD-21242"/>
<dbReference type="EMDB" id="EMD-23096"/>
<dbReference type="EMDB" id="EMD-23121"/>
<dbReference type="EMDB" id="EMD-36836"/>
<dbReference type="EMDB" id="EMD-36837"/>
<dbReference type="EMDB" id="EMD-3842"/>
<dbReference type="EMDB" id="EMD-3843"/>
<dbReference type="EMDB" id="EMD-38632"/>
<dbReference type="EMDB" id="EMD-38633"/>
<dbReference type="EMDB" id="EMD-38634"/>
<dbReference type="EMDB" id="EMD-38635"/>
<dbReference type="EMDB" id="EMD-4434"/>
<dbReference type="SMR" id="Q9H9J2"/>
<dbReference type="BioGRID" id="122389">
    <property type="interactions" value="239"/>
</dbReference>
<dbReference type="ComplexPortal" id="CPX-5226">
    <property type="entry name" value="39S mitochondrial large ribosomal subunit"/>
</dbReference>
<dbReference type="CORUM" id="Q9H9J2"/>
<dbReference type="FunCoup" id="Q9H9J2">
    <property type="interactions" value="1578"/>
</dbReference>
<dbReference type="IntAct" id="Q9H9J2">
    <property type="interactions" value="100"/>
</dbReference>
<dbReference type="MINT" id="Q9H9J2"/>
<dbReference type="STRING" id="9606.ENSP00000258383"/>
<dbReference type="GlyGen" id="Q9H9J2">
    <property type="glycosylation" value="2 sites, 1 N-linked glycan (1 site), 1 O-linked glycan (1 site)"/>
</dbReference>
<dbReference type="iPTMnet" id="Q9H9J2"/>
<dbReference type="PhosphoSitePlus" id="Q9H9J2"/>
<dbReference type="SwissPalm" id="Q9H9J2"/>
<dbReference type="BioMuta" id="MRPL44"/>
<dbReference type="DMDM" id="51316917"/>
<dbReference type="jPOST" id="Q9H9J2"/>
<dbReference type="MassIVE" id="Q9H9J2"/>
<dbReference type="PaxDb" id="9606-ENSP00000258383"/>
<dbReference type="PeptideAtlas" id="Q9H9J2"/>
<dbReference type="ProteomicsDB" id="81324"/>
<dbReference type="Pumba" id="Q9H9J2"/>
<dbReference type="TopDownProteomics" id="Q9H9J2"/>
<dbReference type="Antibodypedia" id="34365">
    <property type="antibodies" value="156 antibodies from 23 providers"/>
</dbReference>
<dbReference type="DNASU" id="65080"/>
<dbReference type="Ensembl" id="ENST00000258383.4">
    <property type="protein sequence ID" value="ENSP00000258383.3"/>
    <property type="gene ID" value="ENSG00000135900.4"/>
</dbReference>
<dbReference type="GeneID" id="65080"/>
<dbReference type="KEGG" id="hsa:65080"/>
<dbReference type="MANE-Select" id="ENST00000258383.4">
    <property type="protein sequence ID" value="ENSP00000258383.3"/>
    <property type="RefSeq nucleotide sequence ID" value="NM_022915.5"/>
    <property type="RefSeq protein sequence ID" value="NP_075066.1"/>
</dbReference>
<dbReference type="UCSC" id="uc002vnr.4">
    <property type="organism name" value="human"/>
</dbReference>
<dbReference type="AGR" id="HGNC:16650"/>
<dbReference type="CTD" id="65080"/>
<dbReference type="DisGeNET" id="65080"/>
<dbReference type="GeneCards" id="MRPL44"/>
<dbReference type="HGNC" id="HGNC:16650">
    <property type="gene designation" value="MRPL44"/>
</dbReference>
<dbReference type="HPA" id="ENSG00000135900">
    <property type="expression patterns" value="Low tissue specificity"/>
</dbReference>
<dbReference type="MalaCards" id="MRPL44"/>
<dbReference type="MIM" id="611849">
    <property type="type" value="gene"/>
</dbReference>
<dbReference type="MIM" id="615395">
    <property type="type" value="phenotype"/>
</dbReference>
<dbReference type="neXtProt" id="NX_Q9H9J2"/>
<dbReference type="OpenTargets" id="ENSG00000135900"/>
<dbReference type="Orphanet" id="352563">
    <property type="disease" value="Infantile hypertrophic cardiomyopathy due to MRPL44 deficiency"/>
</dbReference>
<dbReference type="PharmGKB" id="PA30976"/>
<dbReference type="VEuPathDB" id="HostDB:ENSG00000135900"/>
<dbReference type="eggNOG" id="KOG3769">
    <property type="taxonomic scope" value="Eukaryota"/>
</dbReference>
<dbReference type="GeneTree" id="ENSGT00390000016956"/>
<dbReference type="HOGENOM" id="CLU_058895_0_0_1"/>
<dbReference type="InParanoid" id="Q9H9J2"/>
<dbReference type="OMA" id="ACYRVGL"/>
<dbReference type="OrthoDB" id="444135at2759"/>
<dbReference type="PAN-GO" id="Q9H9J2">
    <property type="GO annotations" value="3 GO annotations based on evolutionary models"/>
</dbReference>
<dbReference type="PhylomeDB" id="Q9H9J2"/>
<dbReference type="TreeFam" id="TF324185"/>
<dbReference type="PathwayCommons" id="Q9H9J2"/>
<dbReference type="Reactome" id="R-HSA-5368286">
    <property type="pathway name" value="Mitochondrial translation initiation"/>
</dbReference>
<dbReference type="Reactome" id="R-HSA-5389840">
    <property type="pathway name" value="Mitochondrial translation elongation"/>
</dbReference>
<dbReference type="Reactome" id="R-HSA-5419276">
    <property type="pathway name" value="Mitochondrial translation termination"/>
</dbReference>
<dbReference type="SignaLink" id="Q9H9J2"/>
<dbReference type="SIGNOR" id="Q9H9J2"/>
<dbReference type="BioGRID-ORCS" id="65080">
    <property type="hits" value="319 hits in 1164 CRISPR screens"/>
</dbReference>
<dbReference type="ChiTaRS" id="MRPL44">
    <property type="organism name" value="human"/>
</dbReference>
<dbReference type="EvolutionaryTrace" id="Q9H9J2"/>
<dbReference type="GenomeRNAi" id="65080"/>
<dbReference type="Pharos" id="Q9H9J2">
    <property type="development level" value="Tbio"/>
</dbReference>
<dbReference type="PRO" id="PR:Q9H9J2"/>
<dbReference type="Proteomes" id="UP000005640">
    <property type="component" value="Chromosome 2"/>
</dbReference>
<dbReference type="RNAct" id="Q9H9J2">
    <property type="molecule type" value="protein"/>
</dbReference>
<dbReference type="Bgee" id="ENSG00000135900">
    <property type="expression patterns" value="Expressed in oocyte and 173 other cell types or tissues"/>
</dbReference>
<dbReference type="ExpressionAtlas" id="Q9H9J2">
    <property type="expression patterns" value="baseline and differential"/>
</dbReference>
<dbReference type="GO" id="GO:0005743">
    <property type="term" value="C:mitochondrial inner membrane"/>
    <property type="evidence" value="ECO:0000304"/>
    <property type="project" value="Reactome"/>
</dbReference>
<dbReference type="GO" id="GO:0005762">
    <property type="term" value="C:mitochondrial large ribosomal subunit"/>
    <property type="evidence" value="ECO:0000314"/>
    <property type="project" value="UniProtKB"/>
</dbReference>
<dbReference type="GO" id="GO:0005739">
    <property type="term" value="C:mitochondrion"/>
    <property type="evidence" value="ECO:0000314"/>
    <property type="project" value="UniProtKB"/>
</dbReference>
<dbReference type="GO" id="GO:0016604">
    <property type="term" value="C:nuclear body"/>
    <property type="evidence" value="ECO:0000314"/>
    <property type="project" value="HPA"/>
</dbReference>
<dbReference type="GO" id="GO:0005654">
    <property type="term" value="C:nucleoplasm"/>
    <property type="evidence" value="ECO:0000314"/>
    <property type="project" value="HPA"/>
</dbReference>
<dbReference type="GO" id="GO:0005634">
    <property type="term" value="C:nucleus"/>
    <property type="evidence" value="ECO:0000318"/>
    <property type="project" value="GO_Central"/>
</dbReference>
<dbReference type="GO" id="GO:0005886">
    <property type="term" value="C:plasma membrane"/>
    <property type="evidence" value="ECO:0000314"/>
    <property type="project" value="HPA"/>
</dbReference>
<dbReference type="GO" id="GO:0003725">
    <property type="term" value="F:double-stranded RNA binding"/>
    <property type="evidence" value="ECO:0007669"/>
    <property type="project" value="InterPro"/>
</dbReference>
<dbReference type="GO" id="GO:0004519">
    <property type="term" value="F:endonuclease activity"/>
    <property type="evidence" value="ECO:0007669"/>
    <property type="project" value="UniProtKB-KW"/>
</dbReference>
<dbReference type="GO" id="GO:0003723">
    <property type="term" value="F:RNA binding"/>
    <property type="evidence" value="ECO:0007005"/>
    <property type="project" value="UniProtKB"/>
</dbReference>
<dbReference type="GO" id="GO:0032543">
    <property type="term" value="P:mitochondrial translation"/>
    <property type="evidence" value="ECO:0000303"/>
    <property type="project" value="ComplexPortal"/>
</dbReference>
<dbReference type="GO" id="GO:0070125">
    <property type="term" value="P:mitochondrial translational elongation"/>
    <property type="evidence" value="ECO:0000315"/>
    <property type="project" value="UniProtKB"/>
</dbReference>
<dbReference type="GO" id="GO:0006396">
    <property type="term" value="P:RNA processing"/>
    <property type="evidence" value="ECO:0007669"/>
    <property type="project" value="InterPro"/>
</dbReference>
<dbReference type="CDD" id="cd19874">
    <property type="entry name" value="DSRM_MRPL44"/>
    <property type="match status" value="1"/>
</dbReference>
<dbReference type="FunFam" id="1.10.1520.10:FF:000010">
    <property type="entry name" value="39S ribosomal protein L44, mitochondrial"/>
    <property type="match status" value="1"/>
</dbReference>
<dbReference type="FunFam" id="3.30.160.20:FF:000037">
    <property type="entry name" value="39S ribosomal protein L44, mitochondrial"/>
    <property type="match status" value="1"/>
</dbReference>
<dbReference type="Gene3D" id="3.30.160.20">
    <property type="match status" value="1"/>
</dbReference>
<dbReference type="Gene3D" id="1.10.1520.10">
    <property type="entry name" value="Ribonuclease III domain"/>
    <property type="match status" value="1"/>
</dbReference>
<dbReference type="InterPro" id="IPR014720">
    <property type="entry name" value="dsRBD_dom"/>
</dbReference>
<dbReference type="InterPro" id="IPR044444">
    <property type="entry name" value="Ribosomal_mL44_DSRM_metazoa"/>
</dbReference>
<dbReference type="InterPro" id="IPR055189">
    <property type="entry name" value="RM44_endonuclase"/>
</dbReference>
<dbReference type="InterPro" id="IPR036389">
    <property type="entry name" value="RNase_III_sf"/>
</dbReference>
<dbReference type="PANTHER" id="PTHR11207:SF5">
    <property type="entry name" value="LARGE RIBOSOMAL SUBUNIT PROTEIN ML44"/>
    <property type="match status" value="1"/>
</dbReference>
<dbReference type="PANTHER" id="PTHR11207">
    <property type="entry name" value="RIBONUCLEASE III"/>
    <property type="match status" value="1"/>
</dbReference>
<dbReference type="Pfam" id="PF22892">
    <property type="entry name" value="DSRM_MRPL44"/>
    <property type="match status" value="1"/>
</dbReference>
<dbReference type="Pfam" id="PF22935">
    <property type="entry name" value="RM44_endonuclase"/>
    <property type="match status" value="1"/>
</dbReference>
<dbReference type="SUPFAM" id="SSF54768">
    <property type="entry name" value="dsRNA-binding domain-like"/>
    <property type="match status" value="1"/>
</dbReference>
<dbReference type="SUPFAM" id="SSF69065">
    <property type="entry name" value="RNase III domain-like"/>
    <property type="match status" value="1"/>
</dbReference>
<dbReference type="PROSITE" id="PS50137">
    <property type="entry name" value="DS_RBD"/>
    <property type="match status" value="1"/>
</dbReference>
<keyword id="KW-0002">3D-structure</keyword>
<keyword id="KW-0225">Disease variant</keyword>
<keyword id="KW-0255">Endonuclease</keyword>
<keyword id="KW-0378">Hydrolase</keyword>
<keyword id="KW-0496">Mitochondrion</keyword>
<keyword id="KW-0540">Nuclease</keyword>
<keyword id="KW-1274">Primary mitochondrial disease</keyword>
<keyword id="KW-1267">Proteomics identification</keyword>
<keyword id="KW-1185">Reference proteome</keyword>
<keyword id="KW-0687">Ribonucleoprotein</keyword>
<keyword id="KW-0689">Ribosomal protein</keyword>
<keyword id="KW-0694">RNA-binding</keyword>
<keyword id="KW-0809">Transit peptide</keyword>
<sequence length="332" mass="37535">MASGLVRLLQQGHRCLLAPVAPKLVPPVRGVKKGFRAAFRFQKELERQRLLRCPPPPVRRSEKPNWDYHAEIQAFGHRLQENFSLDLLKTAFVNSCYIKSEEAKRQQLGIEKEAVLLNLKSNQELSEQGTSFSQTCLTQFLEDEYPDMPTEGIKNLVDFLTGEEVVCHVARNLAVEQLTLSEEFPVPPAVLQQTFFAVIGALLQSSGPERTALFIRDFLITQMTGKELFEMWKIINPMGLLVEELKKRNVSAPESRLTRQSGGTTALPLYFVGLYCDKKLIAEGPGETVLVAEEEAARVALRKLYGFTENRRPWNYSKPKETLRAEKSITAS</sequence>
<name>RM44_HUMAN</name>
<comment type="function">
    <text evidence="3">Component of the 39S subunit of mitochondrial ribosome. May have a function in the assembly/stability of nascent mitochondrial polypeptides exiting the ribosome.</text>
</comment>
<comment type="subunit">
    <text evidence="4 5 6 7">Component of the mitochondrial large ribosomal subunit (mt-LSU) (PubMed:25278503, PubMed:25838379, PubMed:28892042, PubMed:35177605). Mature mammalian 55S mitochondrial ribosomes consist of a small (28S) and a large (39S) subunit. The 28S small subunit contains a 12S ribosomal RNA (12S mt-rRNA) and 30 different proteins. The 39S large subunit contains a 16S rRNA (16S mt-rRNA), a copy of mitochondrial valine transfer RNA (mt-tRNA(Val)), which plays an integral structural role, and 52 different proteins.</text>
</comment>
<comment type="interaction">
    <interactant intactId="EBI-713619">
        <id>Q9H9J2</id>
    </interactant>
    <interactant intactId="EBI-743598">
        <id>Q9NYB9</id>
        <label>ABI2</label>
    </interactant>
    <organismsDiffer>false</organismsDiffer>
    <experiments>3</experiments>
</comment>
<comment type="subcellular location">
    <subcellularLocation>
        <location evidence="4 5 6">Mitochondrion</location>
    </subcellularLocation>
</comment>
<comment type="disease" evidence="3">
    <disease id="DI-03874">
        <name>Combined oxidative phosphorylation deficiency 16</name>
        <acronym>COXPD16</acronym>
        <description>An autosomal recessive, mitochondrial disorder characterized by hypertrophic cardiomyopathy, liver steatosis, and decreased levels of mitochondrial complexes I and IV in heart and skeletal muscle.</description>
        <dbReference type="MIM" id="615395"/>
    </disease>
    <text>The disease is caused by variants affecting the gene represented in this entry.</text>
</comment>
<comment type="similarity">
    <text evidence="9">Belongs to the ribonuclease III family. Mitochondrion-specific ribosomal protein mL44 subfamily.</text>
</comment>
<protein>
    <recommendedName>
        <fullName evidence="8">Large ribosomal subunit protein mL44</fullName>
        <ecNumber>3.1.26.-</ecNumber>
    </recommendedName>
    <alternativeName>
        <fullName>39S ribosomal protein L44, mitochondrial</fullName>
        <shortName>L44mt</shortName>
        <shortName>MRP-L44</shortName>
    </alternativeName>
</protein>
<evidence type="ECO:0000255" key="1"/>
<evidence type="ECO:0000255" key="2">
    <source>
        <dbReference type="PROSITE-ProRule" id="PRU00266"/>
    </source>
</evidence>
<evidence type="ECO:0000269" key="3">
    <source>
    </source>
</evidence>
<evidence type="ECO:0000269" key="4">
    <source>
    </source>
</evidence>
<evidence type="ECO:0000269" key="5">
    <source>
    </source>
</evidence>
<evidence type="ECO:0000269" key="6">
    <source>
    </source>
</evidence>
<evidence type="ECO:0000269" key="7">
    <source>
    </source>
</evidence>
<evidence type="ECO:0000303" key="8">
    <source>
    </source>
</evidence>
<evidence type="ECO:0000305" key="9"/>
<evidence type="ECO:0000312" key="10">
    <source>
        <dbReference type="EMBL" id="BAB14234.1"/>
    </source>
</evidence>
<evidence type="ECO:0007744" key="11">
    <source>
        <dbReference type="PDB" id="3J7Y"/>
    </source>
</evidence>
<evidence type="ECO:0007744" key="12">
    <source>
        <dbReference type="PDB" id="3J9M"/>
    </source>
</evidence>
<evidence type="ECO:0007744" key="13">
    <source>
        <dbReference type="PDB" id="5OOL"/>
    </source>
</evidence>
<evidence type="ECO:0007744" key="14">
    <source>
        <dbReference type="PDB" id="5OOM"/>
    </source>
</evidence>
<evidence type="ECO:0007744" key="15">
    <source>
        <dbReference type="PDB" id="7QH6"/>
    </source>
</evidence>
<evidence type="ECO:0007744" key="16">
    <source>
        <dbReference type="PDB" id="7QH7"/>
    </source>
</evidence>
<evidence type="ECO:0007829" key="17">
    <source>
        <dbReference type="PDB" id="5OOL"/>
    </source>
</evidence>
<evidence type="ECO:0007829" key="18">
    <source>
        <dbReference type="PDB" id="7OF0"/>
    </source>
</evidence>
<evidence type="ECO:0007829" key="19">
    <source>
        <dbReference type="PDB" id="7QH7"/>
    </source>
</evidence>
<proteinExistence type="evidence at protein level"/>